<evidence type="ECO:0000255" key="1">
    <source>
        <dbReference type="HAMAP-Rule" id="MF_00127"/>
    </source>
</evidence>
<dbReference type="EC" id="6.1.1.21" evidence="1"/>
<dbReference type="EMBL" id="AM408590">
    <property type="protein sequence ID" value="CAL72591.1"/>
    <property type="molecule type" value="Genomic_DNA"/>
</dbReference>
<dbReference type="RefSeq" id="WP_003413365.1">
    <property type="nucleotide sequence ID" value="NC_008769.1"/>
</dbReference>
<dbReference type="SMR" id="A1KLS8"/>
<dbReference type="GeneID" id="45426582"/>
<dbReference type="KEGG" id="mbb:BCG_2603c"/>
<dbReference type="HOGENOM" id="CLU_025113_1_1_11"/>
<dbReference type="Proteomes" id="UP000001472">
    <property type="component" value="Chromosome"/>
</dbReference>
<dbReference type="GO" id="GO:0005737">
    <property type="term" value="C:cytoplasm"/>
    <property type="evidence" value="ECO:0007669"/>
    <property type="project" value="UniProtKB-SubCell"/>
</dbReference>
<dbReference type="GO" id="GO:0005524">
    <property type="term" value="F:ATP binding"/>
    <property type="evidence" value="ECO:0007669"/>
    <property type="project" value="UniProtKB-UniRule"/>
</dbReference>
<dbReference type="GO" id="GO:0004821">
    <property type="term" value="F:histidine-tRNA ligase activity"/>
    <property type="evidence" value="ECO:0007669"/>
    <property type="project" value="UniProtKB-UniRule"/>
</dbReference>
<dbReference type="GO" id="GO:0006427">
    <property type="term" value="P:histidyl-tRNA aminoacylation"/>
    <property type="evidence" value="ECO:0007669"/>
    <property type="project" value="UniProtKB-UniRule"/>
</dbReference>
<dbReference type="CDD" id="cd00773">
    <property type="entry name" value="HisRS-like_core"/>
    <property type="match status" value="1"/>
</dbReference>
<dbReference type="CDD" id="cd00859">
    <property type="entry name" value="HisRS_anticodon"/>
    <property type="match status" value="1"/>
</dbReference>
<dbReference type="FunFam" id="3.30.930.10:FF:000005">
    <property type="entry name" value="Histidine--tRNA ligase"/>
    <property type="match status" value="1"/>
</dbReference>
<dbReference type="Gene3D" id="3.40.50.800">
    <property type="entry name" value="Anticodon-binding domain"/>
    <property type="match status" value="1"/>
</dbReference>
<dbReference type="Gene3D" id="3.30.930.10">
    <property type="entry name" value="Bira Bifunctional Protein, Domain 2"/>
    <property type="match status" value="1"/>
</dbReference>
<dbReference type="HAMAP" id="MF_00127">
    <property type="entry name" value="His_tRNA_synth"/>
    <property type="match status" value="1"/>
</dbReference>
<dbReference type="InterPro" id="IPR006195">
    <property type="entry name" value="aa-tRNA-synth_II"/>
</dbReference>
<dbReference type="InterPro" id="IPR045864">
    <property type="entry name" value="aa-tRNA-synth_II/BPL/LPL"/>
</dbReference>
<dbReference type="InterPro" id="IPR004154">
    <property type="entry name" value="Anticodon-bd"/>
</dbReference>
<dbReference type="InterPro" id="IPR036621">
    <property type="entry name" value="Anticodon-bd_dom_sf"/>
</dbReference>
<dbReference type="InterPro" id="IPR015807">
    <property type="entry name" value="His-tRNA-ligase"/>
</dbReference>
<dbReference type="InterPro" id="IPR041715">
    <property type="entry name" value="HisRS-like_core"/>
</dbReference>
<dbReference type="InterPro" id="IPR004516">
    <property type="entry name" value="HisRS/HisZ"/>
</dbReference>
<dbReference type="InterPro" id="IPR033656">
    <property type="entry name" value="HisRS_anticodon"/>
</dbReference>
<dbReference type="NCBIfam" id="TIGR00442">
    <property type="entry name" value="hisS"/>
    <property type="match status" value="1"/>
</dbReference>
<dbReference type="PANTHER" id="PTHR43707:SF1">
    <property type="entry name" value="HISTIDINE--TRNA LIGASE, MITOCHONDRIAL-RELATED"/>
    <property type="match status" value="1"/>
</dbReference>
<dbReference type="PANTHER" id="PTHR43707">
    <property type="entry name" value="HISTIDYL-TRNA SYNTHETASE"/>
    <property type="match status" value="1"/>
</dbReference>
<dbReference type="Pfam" id="PF03129">
    <property type="entry name" value="HGTP_anticodon"/>
    <property type="match status" value="1"/>
</dbReference>
<dbReference type="Pfam" id="PF13393">
    <property type="entry name" value="tRNA-synt_His"/>
    <property type="match status" value="1"/>
</dbReference>
<dbReference type="PIRSF" id="PIRSF001549">
    <property type="entry name" value="His-tRNA_synth"/>
    <property type="match status" value="1"/>
</dbReference>
<dbReference type="SUPFAM" id="SSF52954">
    <property type="entry name" value="Class II aaRS ABD-related"/>
    <property type="match status" value="1"/>
</dbReference>
<dbReference type="SUPFAM" id="SSF55681">
    <property type="entry name" value="Class II aaRS and biotin synthetases"/>
    <property type="match status" value="1"/>
</dbReference>
<dbReference type="PROSITE" id="PS50862">
    <property type="entry name" value="AA_TRNA_LIGASE_II"/>
    <property type="match status" value="1"/>
</dbReference>
<name>SYH_MYCBP</name>
<comment type="catalytic activity">
    <reaction evidence="1">
        <text>tRNA(His) + L-histidine + ATP = L-histidyl-tRNA(His) + AMP + diphosphate + H(+)</text>
        <dbReference type="Rhea" id="RHEA:17313"/>
        <dbReference type="Rhea" id="RHEA-COMP:9665"/>
        <dbReference type="Rhea" id="RHEA-COMP:9689"/>
        <dbReference type="ChEBI" id="CHEBI:15378"/>
        <dbReference type="ChEBI" id="CHEBI:30616"/>
        <dbReference type="ChEBI" id="CHEBI:33019"/>
        <dbReference type="ChEBI" id="CHEBI:57595"/>
        <dbReference type="ChEBI" id="CHEBI:78442"/>
        <dbReference type="ChEBI" id="CHEBI:78527"/>
        <dbReference type="ChEBI" id="CHEBI:456215"/>
        <dbReference type="EC" id="6.1.1.21"/>
    </reaction>
</comment>
<comment type="subunit">
    <text evidence="1">Homodimer.</text>
</comment>
<comment type="subcellular location">
    <subcellularLocation>
        <location evidence="1">Cytoplasm</location>
    </subcellularLocation>
</comment>
<comment type="similarity">
    <text evidence="1">Belongs to the class-II aminoacyl-tRNA synthetase family.</text>
</comment>
<organism>
    <name type="scientific">Mycobacterium bovis (strain BCG / Pasteur 1173P2)</name>
    <dbReference type="NCBI Taxonomy" id="410289"/>
    <lineage>
        <taxon>Bacteria</taxon>
        <taxon>Bacillati</taxon>
        <taxon>Actinomycetota</taxon>
        <taxon>Actinomycetes</taxon>
        <taxon>Mycobacteriales</taxon>
        <taxon>Mycobacteriaceae</taxon>
        <taxon>Mycobacterium</taxon>
        <taxon>Mycobacterium tuberculosis complex</taxon>
    </lineage>
</organism>
<feature type="chain" id="PRO_1000016396" description="Histidine--tRNA ligase">
    <location>
        <begin position="1"/>
        <end position="423"/>
    </location>
</feature>
<reference key="1">
    <citation type="journal article" date="2007" name="Proc. Natl. Acad. Sci. U.S.A.">
        <title>Genome plasticity of BCG and impact on vaccine efficacy.</title>
        <authorList>
            <person name="Brosch R."/>
            <person name="Gordon S.V."/>
            <person name="Garnier T."/>
            <person name="Eiglmeier K."/>
            <person name="Frigui W."/>
            <person name="Valenti P."/>
            <person name="Dos Santos S."/>
            <person name="Duthoy S."/>
            <person name="Lacroix C."/>
            <person name="Garcia-Pelayo C."/>
            <person name="Inwald J.K."/>
            <person name="Golby P."/>
            <person name="Garcia J.N."/>
            <person name="Hewinson R.G."/>
            <person name="Behr M.A."/>
            <person name="Quail M.A."/>
            <person name="Churcher C."/>
            <person name="Barrell B.G."/>
            <person name="Parkhill J."/>
            <person name="Cole S.T."/>
        </authorList>
    </citation>
    <scope>NUCLEOTIDE SEQUENCE [LARGE SCALE GENOMIC DNA]</scope>
    <source>
        <strain>BCG / Pasteur 1173P2</strain>
    </source>
</reference>
<keyword id="KW-0030">Aminoacyl-tRNA synthetase</keyword>
<keyword id="KW-0067">ATP-binding</keyword>
<keyword id="KW-0963">Cytoplasm</keyword>
<keyword id="KW-0436">Ligase</keyword>
<keyword id="KW-0547">Nucleotide-binding</keyword>
<keyword id="KW-0648">Protein biosynthesis</keyword>
<protein>
    <recommendedName>
        <fullName evidence="1">Histidine--tRNA ligase</fullName>
        <ecNumber evidence="1">6.1.1.21</ecNumber>
    </recommendedName>
    <alternativeName>
        <fullName evidence="1">Histidyl-tRNA synthetase</fullName>
        <shortName evidence="1">HisRS</shortName>
    </alternativeName>
</protein>
<proteinExistence type="inferred from homology"/>
<accession>A1KLS8</accession>
<gene>
    <name evidence="1" type="primary">hisS</name>
    <name type="ordered locus">BCG_2603c</name>
</gene>
<sequence>MTEFSSFSAPKGVPDYVPPDSAQFVAVRDGLLAAARQAGYSHIELPIFEDTALFARGVGESTDVVSKEMYTFADRGDRSVTLRPEGTAGVVRAVIEHGLDRGALPVKLCYAGPFFRYERPQAGRYRQLQQVGVEAIGVDDPALDAEVIAIADAGFRSLGLDGFRLEITSLGDESCRPQYRELLQEFLFGLDLDEDTRRRAGINPLRVLDDKRPELRAMTASAPVLLDHLSDVAKQHFDTVLAHLDALGVPYVINPRMVRGLDYYTKTAFEFVHDGLGAQSGIGGGGRYDGLMHQLGGQDLSGIGFGLGVDRTVLALRAEGKTAGDSARCDVFGVPLGEAAKLRLAVLAGRLRAAGVRVDLAYGDRGLKGAMRAAARSGARVALVAGDRDIEAGTVAVKDLTTGEQVSVSMDSVVAEVISRLAG</sequence>